<accession>P48335</accession>
<reference key="1">
    <citation type="journal article" date="1995" name="Plant Mol. Biol. Rep.">
        <title>Nucleotide sequence of the cyanelle DNA from Cyanophora paradoxa.</title>
        <authorList>
            <person name="Stirewalt V.L."/>
            <person name="Michalowski C.B."/>
            <person name="Loeffelhardt W."/>
            <person name="Bohnert H.J."/>
            <person name="Bryant D.A."/>
        </authorList>
    </citation>
    <scope>NUCLEOTIDE SEQUENCE [LARGE SCALE GENOMIC DNA]</scope>
    <source>
        <strain>UTEX LB 555 / Pringsheim</strain>
    </source>
</reference>
<reference key="2">
    <citation type="book" date="1997" name="Eukaryotism and symbiosis">
        <title>The complete sequence of the cyanelle genome of Cyanophora paradoxa: the genetic complexity of a primitive plastid.</title>
        <editorList>
            <person name="Schenk H.E.A."/>
            <person name="Herrmann R."/>
            <person name="Jeon K.W."/>
            <person name="Mueller N.E."/>
            <person name="Schwemmler W."/>
        </editorList>
        <authorList>
            <person name="Loeffelhardt W."/>
            <person name="Stirewalt V.L."/>
            <person name="Michalowski C.B."/>
            <person name="Annarella M."/>
            <person name="Farley J.Y."/>
            <person name="Schluchter W.M."/>
            <person name="Chung S."/>
            <person name="Newmann-Spallart C."/>
            <person name="Steiner J.M."/>
            <person name="Jakowitsch J."/>
            <person name="Bohnert H.J."/>
            <person name="Bryant D.A."/>
        </authorList>
    </citation>
    <scope>NUCLEOTIDE SEQUENCE [LARGE SCALE GENOMIC DNA]</scope>
    <source>
        <strain>UTEX LB 555 / Pringsheim</strain>
    </source>
</reference>
<name>YCXE_CYAPA</name>
<comment type="subcellular location">
    <subcellularLocation>
        <location>Plastid</location>
        <location>Cyanelle</location>
    </subcellularLocation>
</comment>
<keyword id="KW-0194">Cyanelle</keyword>
<keyword id="KW-0934">Plastid</keyword>
<proteinExistence type="predicted"/>
<dbReference type="EMBL" id="U30821">
    <property type="protein sequence ID" value="AAA81305.1"/>
    <property type="molecule type" value="Genomic_DNA"/>
</dbReference>
<dbReference type="PIR" id="T06962">
    <property type="entry name" value="T06962"/>
</dbReference>
<dbReference type="RefSeq" id="NP_043274.1">
    <property type="nucleotide sequence ID" value="NC_001675.1"/>
</dbReference>
<dbReference type="GeneID" id="1457213"/>
<dbReference type="GO" id="GO:0009842">
    <property type="term" value="C:cyanelle"/>
    <property type="evidence" value="ECO:0007669"/>
    <property type="project" value="UniProtKB-SubCell"/>
</dbReference>
<organism>
    <name type="scientific">Cyanophora paradoxa</name>
    <dbReference type="NCBI Taxonomy" id="2762"/>
    <lineage>
        <taxon>Eukaryota</taxon>
        <taxon>Glaucocystophyceae</taxon>
        <taxon>Cyanophoraceae</taxon>
        <taxon>Cyanophora</taxon>
    </lineage>
</organism>
<geneLocation type="cyanelle"/>
<feature type="chain" id="PRO_0000217433" description="Uncharacterized 21.2 kDa protein in ycf23-apcF intergenic region">
    <location>
        <begin position="1"/>
        <end position="179"/>
    </location>
</feature>
<sequence>MLYLRDHQPVAVLFDDNFEKIQGVVDRNGYVFKNVTPQQITTIEFLLNKKLLKVRGFKNIIIRWAALYLLICDSQTKIYEVILEKGHDITFGTEAGYVFFGEYINMDQLRKRFFYMDHLHNLWREGNLFSEVHVNLTKSAHCYIDLTENKTPILSMLDDVSSFRIKDDNYRWPSQLKDE</sequence>
<protein>
    <recommendedName>
        <fullName>Uncharacterized 21.2 kDa protein in ycf23-apcF intergenic region</fullName>
    </recommendedName>
    <alternativeName>
        <fullName>ORF179</fullName>
    </alternativeName>
</protein>